<keyword id="KW-1185">Reference proteome</keyword>
<name>U512X_DICDI</name>
<reference key="1">
    <citation type="journal article" date="2005" name="Nature">
        <title>The genome of the social amoeba Dictyostelium discoideum.</title>
        <authorList>
            <person name="Eichinger L."/>
            <person name="Pachebat J.A."/>
            <person name="Gloeckner G."/>
            <person name="Rajandream M.A."/>
            <person name="Sucgang R."/>
            <person name="Berriman M."/>
            <person name="Song J."/>
            <person name="Olsen R."/>
            <person name="Szafranski K."/>
            <person name="Xu Q."/>
            <person name="Tunggal B."/>
            <person name="Kummerfeld S."/>
            <person name="Madera M."/>
            <person name="Konfortov B.A."/>
            <person name="Rivero F."/>
            <person name="Bankier A.T."/>
            <person name="Lehmann R."/>
            <person name="Hamlin N."/>
            <person name="Davies R."/>
            <person name="Gaudet P."/>
            <person name="Fey P."/>
            <person name="Pilcher K."/>
            <person name="Chen G."/>
            <person name="Saunders D."/>
            <person name="Sodergren E.J."/>
            <person name="Davis P."/>
            <person name="Kerhornou A."/>
            <person name="Nie X."/>
            <person name="Hall N."/>
            <person name="Anjard C."/>
            <person name="Hemphill L."/>
            <person name="Bason N."/>
            <person name="Farbrother P."/>
            <person name="Desany B."/>
            <person name="Just E."/>
            <person name="Morio T."/>
            <person name="Rost R."/>
            <person name="Churcher C.M."/>
            <person name="Cooper J."/>
            <person name="Haydock S."/>
            <person name="van Driessche N."/>
            <person name="Cronin A."/>
            <person name="Goodhead I."/>
            <person name="Muzny D.M."/>
            <person name="Mourier T."/>
            <person name="Pain A."/>
            <person name="Lu M."/>
            <person name="Harper D."/>
            <person name="Lindsay R."/>
            <person name="Hauser H."/>
            <person name="James K.D."/>
            <person name="Quiles M."/>
            <person name="Madan Babu M."/>
            <person name="Saito T."/>
            <person name="Buchrieser C."/>
            <person name="Wardroper A."/>
            <person name="Felder M."/>
            <person name="Thangavelu M."/>
            <person name="Johnson D."/>
            <person name="Knights A."/>
            <person name="Loulseged H."/>
            <person name="Mungall K.L."/>
            <person name="Oliver K."/>
            <person name="Price C."/>
            <person name="Quail M.A."/>
            <person name="Urushihara H."/>
            <person name="Hernandez J."/>
            <person name="Rabbinowitsch E."/>
            <person name="Steffen D."/>
            <person name="Sanders M."/>
            <person name="Ma J."/>
            <person name="Kohara Y."/>
            <person name="Sharp S."/>
            <person name="Simmonds M.N."/>
            <person name="Spiegler S."/>
            <person name="Tivey A."/>
            <person name="Sugano S."/>
            <person name="White B."/>
            <person name="Walker D."/>
            <person name="Woodward J.R."/>
            <person name="Winckler T."/>
            <person name="Tanaka Y."/>
            <person name="Shaulsky G."/>
            <person name="Schleicher M."/>
            <person name="Weinstock G.M."/>
            <person name="Rosenthal A."/>
            <person name="Cox E.C."/>
            <person name="Chisholm R.L."/>
            <person name="Gibbs R.A."/>
            <person name="Loomis W.F."/>
            <person name="Platzer M."/>
            <person name="Kay R.R."/>
            <person name="Williams J.G."/>
            <person name="Dear P.H."/>
            <person name="Noegel A.A."/>
            <person name="Barrell B.G."/>
            <person name="Kuspa A."/>
        </authorList>
    </citation>
    <scope>NUCLEOTIDE SEQUENCE [LARGE SCALE GENOMIC DNA]</scope>
    <source>
        <strain>AX4</strain>
    </source>
</reference>
<reference key="2">
    <citation type="journal article" date="2008" name="BMC Microbiol.">
        <title>Structural and functional studies of a family of Dictyostelium discoideum developmentally regulated, prestalk genes coding for small proteins.</title>
        <authorList>
            <person name="Vicente J.J."/>
            <person name="Galardi-Castilla M."/>
            <person name="Escalante R."/>
            <person name="Sastre L."/>
        </authorList>
    </citation>
    <scope>IDENTIFICATION</scope>
</reference>
<evidence type="ECO:0000305" key="1"/>
<accession>Q55BU0</accession>
<proteinExistence type="inferred from homology"/>
<feature type="chain" id="PRO_0000394029" description="UPF0512 protein X">
    <location>
        <begin position="1"/>
        <end position="63"/>
    </location>
</feature>
<protein>
    <recommendedName>
        <fullName>UPF0512 protein X</fullName>
    </recommendedName>
</protein>
<gene>
    <name type="ORF">DDB_G0270364</name>
</gene>
<organism>
    <name type="scientific">Dictyostelium discoideum</name>
    <name type="common">Social amoeba</name>
    <dbReference type="NCBI Taxonomy" id="44689"/>
    <lineage>
        <taxon>Eukaryota</taxon>
        <taxon>Amoebozoa</taxon>
        <taxon>Evosea</taxon>
        <taxon>Eumycetozoa</taxon>
        <taxon>Dictyostelia</taxon>
        <taxon>Dictyosteliales</taxon>
        <taxon>Dictyosteliaceae</taxon>
        <taxon>Dictyostelium</taxon>
    </lineage>
</organism>
<dbReference type="EMBL" id="AAFI02000005">
    <property type="protein sequence ID" value="EAL72532.1"/>
    <property type="molecule type" value="Genomic_DNA"/>
</dbReference>
<dbReference type="RefSeq" id="XP_646741.1">
    <property type="nucleotide sequence ID" value="XM_641649.1"/>
</dbReference>
<dbReference type="PaxDb" id="44689-DDB0266553"/>
<dbReference type="EnsemblProtists" id="EAL72532">
    <property type="protein sequence ID" value="EAL72532"/>
    <property type="gene ID" value="DDB_G0270364"/>
</dbReference>
<dbReference type="GeneID" id="8617714"/>
<dbReference type="KEGG" id="ddi:DDB_G0270364"/>
<dbReference type="dictyBase" id="DDB_G0270364"/>
<dbReference type="HOGENOM" id="CLU_194865_0_0_1"/>
<dbReference type="InParanoid" id="Q55BU0"/>
<dbReference type="PRO" id="PR:Q55BU0"/>
<dbReference type="Proteomes" id="UP000002195">
    <property type="component" value="Chromosome 1"/>
</dbReference>
<sequence>MTLFNSISSISNSTGISKESLIGNLNSNGIATGNISVSWLGGFDGCGGCGGGCGKNDFLYSSL</sequence>
<comment type="similarity">
    <text evidence="1">Belongs to the UPF0512 family.</text>
</comment>